<comment type="function">
    <text evidence="1">Major role in the synthesis of nucleoside triphosphates other than ATP. The ATP gamma phosphate is transferred to the NDP beta phosphate via a ping-pong mechanism, using a phosphorylated active-site intermediate.</text>
</comment>
<comment type="catalytic activity">
    <reaction evidence="1">
        <text>a 2'-deoxyribonucleoside 5'-diphosphate + ATP = a 2'-deoxyribonucleoside 5'-triphosphate + ADP</text>
        <dbReference type="Rhea" id="RHEA:44640"/>
        <dbReference type="ChEBI" id="CHEBI:30616"/>
        <dbReference type="ChEBI" id="CHEBI:61560"/>
        <dbReference type="ChEBI" id="CHEBI:73316"/>
        <dbReference type="ChEBI" id="CHEBI:456216"/>
        <dbReference type="EC" id="2.7.4.6"/>
    </reaction>
</comment>
<comment type="catalytic activity">
    <reaction evidence="1">
        <text>a ribonucleoside 5'-diphosphate + ATP = a ribonucleoside 5'-triphosphate + ADP</text>
        <dbReference type="Rhea" id="RHEA:18113"/>
        <dbReference type="ChEBI" id="CHEBI:30616"/>
        <dbReference type="ChEBI" id="CHEBI:57930"/>
        <dbReference type="ChEBI" id="CHEBI:61557"/>
        <dbReference type="ChEBI" id="CHEBI:456216"/>
        <dbReference type="EC" id="2.7.4.6"/>
    </reaction>
</comment>
<comment type="cofactor">
    <cofactor evidence="1">
        <name>Mg(2+)</name>
        <dbReference type="ChEBI" id="CHEBI:18420"/>
    </cofactor>
</comment>
<comment type="subunit">
    <text evidence="1">Homotetramer.</text>
</comment>
<comment type="subcellular location">
    <subcellularLocation>
        <location evidence="1">Cytoplasm</location>
    </subcellularLocation>
</comment>
<comment type="similarity">
    <text evidence="1">Belongs to the NDK family.</text>
</comment>
<sequence>MAIQRTFSIIKPDATKRNLTGQIAAKFEEAGLRIVASKRIQLTLAQAQAFYGVHSERPFFGELCEFMISEPIVVQVLEGEDAIVKNREVMGATNPADAAPGTIRKEFALSIGENSVHGSDAPETAAEEIAFFFSGLELVG</sequence>
<feature type="chain" id="PRO_0000242501" description="Nucleoside diphosphate kinase">
    <location>
        <begin position="1"/>
        <end position="140"/>
    </location>
</feature>
<feature type="active site" description="Pros-phosphohistidine intermediate" evidence="1">
    <location>
        <position position="117"/>
    </location>
</feature>
<feature type="binding site" evidence="1">
    <location>
        <position position="11"/>
    </location>
    <ligand>
        <name>ATP</name>
        <dbReference type="ChEBI" id="CHEBI:30616"/>
    </ligand>
</feature>
<feature type="binding site" evidence="1">
    <location>
        <position position="59"/>
    </location>
    <ligand>
        <name>ATP</name>
        <dbReference type="ChEBI" id="CHEBI:30616"/>
    </ligand>
</feature>
<feature type="binding site" evidence="1">
    <location>
        <position position="87"/>
    </location>
    <ligand>
        <name>ATP</name>
        <dbReference type="ChEBI" id="CHEBI:30616"/>
    </ligand>
</feature>
<feature type="binding site" evidence="1">
    <location>
        <position position="93"/>
    </location>
    <ligand>
        <name>ATP</name>
        <dbReference type="ChEBI" id="CHEBI:30616"/>
    </ligand>
</feature>
<feature type="binding site" evidence="1">
    <location>
        <position position="104"/>
    </location>
    <ligand>
        <name>ATP</name>
        <dbReference type="ChEBI" id="CHEBI:30616"/>
    </ligand>
</feature>
<feature type="binding site" evidence="1">
    <location>
        <position position="114"/>
    </location>
    <ligand>
        <name>ATP</name>
        <dbReference type="ChEBI" id="CHEBI:30616"/>
    </ligand>
</feature>
<keyword id="KW-0067">ATP-binding</keyword>
<keyword id="KW-0963">Cytoplasm</keyword>
<keyword id="KW-0418">Kinase</keyword>
<keyword id="KW-0460">Magnesium</keyword>
<keyword id="KW-0479">Metal-binding</keyword>
<keyword id="KW-0546">Nucleotide metabolism</keyword>
<keyword id="KW-0547">Nucleotide-binding</keyword>
<keyword id="KW-0597">Phosphoprotein</keyword>
<keyword id="KW-1185">Reference proteome</keyword>
<keyword id="KW-0808">Transferase</keyword>
<dbReference type="EC" id="2.7.4.6" evidence="1"/>
<dbReference type="EMBL" id="CP000264">
    <property type="protein sequence ID" value="ABD54739.1"/>
    <property type="molecule type" value="Genomic_DNA"/>
</dbReference>
<dbReference type="RefSeq" id="WP_011454944.1">
    <property type="nucleotide sequence ID" value="NC_007802.1"/>
</dbReference>
<dbReference type="SMR" id="Q28RC3"/>
<dbReference type="STRING" id="290400.Jann_1822"/>
<dbReference type="KEGG" id="jan:Jann_1822"/>
<dbReference type="eggNOG" id="COG0105">
    <property type="taxonomic scope" value="Bacteria"/>
</dbReference>
<dbReference type="HOGENOM" id="CLU_060216_8_1_5"/>
<dbReference type="OrthoDB" id="9801161at2"/>
<dbReference type="Proteomes" id="UP000008326">
    <property type="component" value="Chromosome"/>
</dbReference>
<dbReference type="GO" id="GO:0005737">
    <property type="term" value="C:cytoplasm"/>
    <property type="evidence" value="ECO:0007669"/>
    <property type="project" value="UniProtKB-SubCell"/>
</dbReference>
<dbReference type="GO" id="GO:0005524">
    <property type="term" value="F:ATP binding"/>
    <property type="evidence" value="ECO:0007669"/>
    <property type="project" value="UniProtKB-UniRule"/>
</dbReference>
<dbReference type="GO" id="GO:0046872">
    <property type="term" value="F:metal ion binding"/>
    <property type="evidence" value="ECO:0007669"/>
    <property type="project" value="UniProtKB-KW"/>
</dbReference>
<dbReference type="GO" id="GO:0004550">
    <property type="term" value="F:nucleoside diphosphate kinase activity"/>
    <property type="evidence" value="ECO:0007669"/>
    <property type="project" value="UniProtKB-UniRule"/>
</dbReference>
<dbReference type="GO" id="GO:0006241">
    <property type="term" value="P:CTP biosynthetic process"/>
    <property type="evidence" value="ECO:0007669"/>
    <property type="project" value="UniProtKB-UniRule"/>
</dbReference>
<dbReference type="GO" id="GO:0006183">
    <property type="term" value="P:GTP biosynthetic process"/>
    <property type="evidence" value="ECO:0007669"/>
    <property type="project" value="UniProtKB-UniRule"/>
</dbReference>
<dbReference type="GO" id="GO:0006228">
    <property type="term" value="P:UTP biosynthetic process"/>
    <property type="evidence" value="ECO:0007669"/>
    <property type="project" value="UniProtKB-UniRule"/>
</dbReference>
<dbReference type="CDD" id="cd04413">
    <property type="entry name" value="NDPk_I"/>
    <property type="match status" value="1"/>
</dbReference>
<dbReference type="FunFam" id="3.30.70.141:FF:000001">
    <property type="entry name" value="Nucleoside diphosphate kinase"/>
    <property type="match status" value="1"/>
</dbReference>
<dbReference type="Gene3D" id="3.30.70.141">
    <property type="entry name" value="Nucleoside diphosphate kinase-like domain"/>
    <property type="match status" value="1"/>
</dbReference>
<dbReference type="HAMAP" id="MF_00451">
    <property type="entry name" value="NDP_kinase"/>
    <property type="match status" value="1"/>
</dbReference>
<dbReference type="InterPro" id="IPR034907">
    <property type="entry name" value="NDK-like_dom"/>
</dbReference>
<dbReference type="InterPro" id="IPR036850">
    <property type="entry name" value="NDK-like_dom_sf"/>
</dbReference>
<dbReference type="InterPro" id="IPR001564">
    <property type="entry name" value="Nucleoside_diP_kinase"/>
</dbReference>
<dbReference type="InterPro" id="IPR023005">
    <property type="entry name" value="Nucleoside_diP_kinase_AS"/>
</dbReference>
<dbReference type="NCBIfam" id="NF001908">
    <property type="entry name" value="PRK00668.1"/>
    <property type="match status" value="1"/>
</dbReference>
<dbReference type="PANTHER" id="PTHR46161">
    <property type="entry name" value="NUCLEOSIDE DIPHOSPHATE KINASE"/>
    <property type="match status" value="1"/>
</dbReference>
<dbReference type="PANTHER" id="PTHR46161:SF3">
    <property type="entry name" value="NUCLEOSIDE DIPHOSPHATE KINASE DDB_G0292928-RELATED"/>
    <property type="match status" value="1"/>
</dbReference>
<dbReference type="Pfam" id="PF00334">
    <property type="entry name" value="NDK"/>
    <property type="match status" value="1"/>
</dbReference>
<dbReference type="PRINTS" id="PR01243">
    <property type="entry name" value="NUCDPKINASE"/>
</dbReference>
<dbReference type="SMART" id="SM00562">
    <property type="entry name" value="NDK"/>
    <property type="match status" value="1"/>
</dbReference>
<dbReference type="SUPFAM" id="SSF54919">
    <property type="entry name" value="Nucleoside diphosphate kinase, NDK"/>
    <property type="match status" value="1"/>
</dbReference>
<dbReference type="PROSITE" id="PS00469">
    <property type="entry name" value="NDPK"/>
    <property type="match status" value="1"/>
</dbReference>
<dbReference type="PROSITE" id="PS51374">
    <property type="entry name" value="NDPK_LIKE"/>
    <property type="match status" value="1"/>
</dbReference>
<evidence type="ECO:0000255" key="1">
    <source>
        <dbReference type="HAMAP-Rule" id="MF_00451"/>
    </source>
</evidence>
<name>NDK_JANSC</name>
<protein>
    <recommendedName>
        <fullName evidence="1">Nucleoside diphosphate kinase</fullName>
        <shortName evidence="1">NDK</shortName>
        <shortName evidence="1">NDP kinase</shortName>
        <ecNumber evidence="1">2.7.4.6</ecNumber>
    </recommendedName>
    <alternativeName>
        <fullName evidence="1">Nucleoside-2-P kinase</fullName>
    </alternativeName>
</protein>
<reference key="1">
    <citation type="submission" date="2006-02" db="EMBL/GenBank/DDBJ databases">
        <title>Complete sequence of chromosome of Jannaschia sp. CCS1.</title>
        <authorList>
            <consortium name="US DOE Joint Genome Institute"/>
            <person name="Copeland A."/>
            <person name="Lucas S."/>
            <person name="Lapidus A."/>
            <person name="Barry K."/>
            <person name="Detter J.C."/>
            <person name="Glavina del Rio T."/>
            <person name="Hammon N."/>
            <person name="Israni S."/>
            <person name="Pitluck S."/>
            <person name="Brettin T."/>
            <person name="Bruce D."/>
            <person name="Han C."/>
            <person name="Tapia R."/>
            <person name="Gilna P."/>
            <person name="Chertkov O."/>
            <person name="Saunders E."/>
            <person name="Schmutz J."/>
            <person name="Larimer F."/>
            <person name="Land M."/>
            <person name="Kyrpides N."/>
            <person name="Lykidis A."/>
            <person name="Moran M.A."/>
            <person name="Belas R."/>
            <person name="Ye W."/>
            <person name="Buchan A."/>
            <person name="Gonzalez J.M."/>
            <person name="Schell M.A."/>
            <person name="Richardson P."/>
        </authorList>
    </citation>
    <scope>NUCLEOTIDE SEQUENCE [LARGE SCALE GENOMIC DNA]</scope>
    <source>
        <strain>CCS1</strain>
    </source>
</reference>
<organism>
    <name type="scientific">Jannaschia sp. (strain CCS1)</name>
    <dbReference type="NCBI Taxonomy" id="290400"/>
    <lineage>
        <taxon>Bacteria</taxon>
        <taxon>Pseudomonadati</taxon>
        <taxon>Pseudomonadota</taxon>
        <taxon>Alphaproteobacteria</taxon>
        <taxon>Rhodobacterales</taxon>
        <taxon>Roseobacteraceae</taxon>
        <taxon>Jannaschia</taxon>
    </lineage>
</organism>
<gene>
    <name evidence="1" type="primary">ndk</name>
    <name type="ordered locus">Jann_1822</name>
</gene>
<accession>Q28RC3</accession>
<proteinExistence type="inferred from homology"/>